<protein>
    <recommendedName>
        <fullName>X antigen family member 1</fullName>
        <shortName>XAGE-1</shortName>
    </recommendedName>
    <alternativeName>
        <fullName>Cancer/testis antigen 12.1</fullName>
        <shortName>CT12.1</shortName>
    </alternativeName>
    <alternativeName>
        <fullName>G antigen family D member 2</fullName>
    </alternativeName>
</protein>
<evidence type="ECO:0000269" key="1">
    <source>
    </source>
</evidence>
<evidence type="ECO:0000269" key="2">
    <source>
    </source>
</evidence>
<evidence type="ECO:0000303" key="3">
    <source>
    </source>
</evidence>
<evidence type="ECO:0000305" key="4"/>
<evidence type="ECO:0000312" key="5">
    <source>
        <dbReference type="HGNC" id="HGNC:25400"/>
    </source>
</evidence>
<evidence type="ECO:0000312" key="6">
    <source>
        <dbReference type="HGNC" id="HGNC:4111"/>
    </source>
</evidence>
<evidence type="ECO:0007744" key="7">
    <source>
    </source>
</evidence>
<evidence type="ECO:0007744" key="8">
    <source>
    </source>
</evidence>
<organism>
    <name type="scientific">Homo sapiens</name>
    <name type="common">Human</name>
    <dbReference type="NCBI Taxonomy" id="9606"/>
    <lineage>
        <taxon>Eukaryota</taxon>
        <taxon>Metazoa</taxon>
        <taxon>Chordata</taxon>
        <taxon>Craniata</taxon>
        <taxon>Vertebrata</taxon>
        <taxon>Euteleostomi</taxon>
        <taxon>Mammalia</taxon>
        <taxon>Eutheria</taxon>
        <taxon>Euarchontoglires</taxon>
        <taxon>Primates</taxon>
        <taxon>Haplorrhini</taxon>
        <taxon>Catarrhini</taxon>
        <taxon>Hominidae</taxon>
        <taxon>Homo</taxon>
    </lineage>
</organism>
<name>XAGE1_HUMAN</name>
<accession>Q9HD64</accession>
<accession>A6NJ94</accession>
<accession>Q5JPN8</accession>
<accession>Q5JPP0</accession>
<accession>Q5JPP3</accession>
<accession>Q8WWG5</accession>
<accession>Q8WWG6</accession>
<accession>Q969J6</accession>
<keyword id="KW-0025">Alternative splicing</keyword>
<keyword id="KW-1017">Isopeptide bond</keyword>
<keyword id="KW-0597">Phosphoprotein</keyword>
<keyword id="KW-1267">Proteomics identification</keyword>
<keyword id="KW-1185">Reference proteome</keyword>
<keyword id="KW-0832">Ubl conjugation</keyword>
<feature type="chain" id="PRO_0000148349" description="X antigen family member 1">
    <location>
        <begin position="1"/>
        <end position="81"/>
    </location>
</feature>
<feature type="modified residue" description="Phosphoserine" evidence="7">
    <location>
        <position position="20"/>
    </location>
</feature>
<feature type="cross-link" description="Glycyl lysine isopeptide (Lys-Gly) (interchain with G-Cter in SUMO2)" evidence="8">
    <location>
        <position position="12"/>
    </location>
</feature>
<feature type="cross-link" description="Glycyl lysine isopeptide (Lys-Gly) (interchain with G-Cter in SUMO2)" evidence="8">
    <location>
        <position position="61"/>
    </location>
</feature>
<feature type="cross-link" description="Glycyl lysine isopeptide (Lys-Gly) (interchain with G-Cter in SUMO2)" evidence="8">
    <location>
        <position position="65"/>
    </location>
</feature>
<feature type="splice variant" id="VSP_001596" description="In isoform D." evidence="3">
    <original>CATWKVICKSCISQTPGINLDLGSGVKVKIIPKEEHCKMPEAGEEQPQV</original>
    <variation>VLGREMRDMEGDLQELHQSNTGDKSGFGFRRQGEDNT</variation>
    <location>
        <begin position="33"/>
        <end position="81"/>
    </location>
</feature>
<comment type="interaction">
    <interactant intactId="EBI-2340004">
        <id>Q9HD64</id>
    </interactant>
    <interactant intactId="EBI-744695">
        <id>Q8N9N5</id>
        <label>BANP</label>
    </interactant>
    <organismsDiffer>false</organismsDiffer>
    <experiments>3</experiments>
</comment>
<comment type="interaction">
    <interactant intactId="EBI-2340004">
        <id>Q9HD64</id>
    </interactant>
    <interactant intactId="EBI-752324">
        <id>Q8N488</id>
        <label>RYBP</label>
    </interactant>
    <organismsDiffer>false</organismsDiffer>
    <experiments>3</experiments>
</comment>
<comment type="interaction">
    <interactant intactId="EBI-2340004">
        <id>Q9HD64</id>
    </interactant>
    <interactant intactId="EBI-2548259">
        <id>Q9Y6X0</id>
        <label>SETBP1</label>
    </interactant>
    <organismsDiffer>false</organismsDiffer>
    <experiments>3</experiments>
</comment>
<comment type="interaction">
    <interactant intactId="EBI-2340004">
        <id>Q9HD64</id>
    </interactant>
    <interactant intactId="EBI-947459">
        <id>Q9H2G4</id>
        <label>TSPYL2</label>
    </interactant>
    <organismsDiffer>false</organismsDiffer>
    <experiments>3</experiments>
</comment>
<comment type="interaction">
    <interactant intactId="EBI-2340004">
        <id>Q9HD64</id>
    </interactant>
    <interactant intactId="EBI-2842031">
        <id>Q8IY57</id>
        <label>YAF2</label>
    </interactant>
    <organismsDiffer>false</organismsDiffer>
    <experiments>3</experiments>
</comment>
<comment type="interaction">
    <interactant intactId="EBI-2340004">
        <id>Q9HD64</id>
    </interactant>
    <interactant intactId="EBI-765538">
        <id>P25490</id>
        <label>YY1</label>
    </interactant>
    <organismsDiffer>false</organismsDiffer>
    <experiments>3</experiments>
</comment>
<comment type="alternative products">
    <event type="alternative splicing"/>
    <isoform>
        <id>Q9HD64-2</id>
        <name>B</name>
        <name>XAGE-1a</name>
        <name>XAGE-1b</name>
        <sequence type="displayed"/>
    </isoform>
    <isoform>
        <id>Q9HD64-4</id>
        <name>D</name>
        <name>XAGE-1d</name>
        <sequence type="described" ref="VSP_001596"/>
    </isoform>
</comment>
<comment type="tissue specificity">
    <text evidence="1 2">In normal tissues, highly expressed in testis. Expressed also in many different types of cancers: highly expressed in breast cancer, prostate cancer and many types of lung cancers, including squamous cell carcinoma, small cell carcinoma, non-small cell carcinoma, and adenocarcinoma, as well as in Ewing's cell lines, in some Ewing's sarcoma patient samples, and in one of one alveolar rhabdomyosarcoma patient sample.</text>
</comment>
<comment type="miscellaneous">
    <text>According to PubMed:11992404, the transcription of XAGE1A is regulated by methylation of the CpG island in the promoter, and four alternative RNA splicing variants, XAGE-1a, b, c have been identified.</text>
</comment>
<comment type="miscellaneous">
    <molecule>Isoform B</molecule>
    <text>XAGE-1a and XAGE-1b mRNAs are produced by alternative promoter usage. However, for both isoforms, the translation initiator codon remains the same, generating an identical protein. XAGE-1b is the predominant transcript, compared to XAGE-1a.</text>
</comment>
<comment type="similarity">
    <text evidence="4">Belongs to the GAGE family.</text>
</comment>
<comment type="caution">
    <text evidence="4">PubMed:17335148, examines the translation products of theses four XAGE1A transcripts, and finds that the XAGE-1c transcript is possibly translated to 9- and 17-aa polypeptides and not to a protein consisting of 160 amino acids as shown in PubMed:11992404.</text>
</comment>
<comment type="sequence caution" evidence="4">
    <conflict type="erroneous initiation">
        <sequence resource="EMBL-CDS" id="AAG01401"/>
    </conflict>
    <text>Extended N-terminus.</text>
</comment>
<comment type="sequence caution" evidence="4">
    <conflict type="erroneous initiation">
        <sequence resource="EMBL-CDS" id="AAH09538"/>
    </conflict>
    <text>Extended N-terminus.</text>
</comment>
<comment type="sequence caution" evidence="4">
    <conflict type="erroneous initiation">
        <sequence resource="EMBL-CDS" id="CAC82986"/>
    </conflict>
    <text>Extended N-terminus.</text>
</comment>
<comment type="sequence caution" evidence="4">
    <conflict type="erroneous gene model prediction">
        <sequence resource="EMBL-CDS" id="CAI41526"/>
    </conflict>
</comment>
<comment type="sequence caution" evidence="4">
    <conflict type="erroneous gene model prediction">
        <sequence resource="EMBL-CDS" id="CAI41531"/>
    </conflict>
</comment>
<comment type="sequence caution" evidence="4">
    <conflict type="erroneous gene model prediction">
        <sequence resource="EMBL-CDS" id="CAI41534"/>
    </conflict>
</comment>
<sequence>MESPKKKNQQLKVGILHLGSRQKKIRIQLRSQCATWKVICKSCISQTPGINLDLGSGVKVKIIPKEEHCKMPEAGEEQPQV</sequence>
<gene>
    <name evidence="6" type="primary">XAGE1A</name>
    <name evidence="6" type="synonym">GAGED2</name>
    <name evidence="6" type="synonym">XAGE1</name>
</gene>
<gene>
    <name evidence="5" type="primary">XAGE1B</name>
    <name evidence="5" type="synonym">XAGE1C</name>
    <name evidence="5" type="synonym">XAGE1D</name>
    <name evidence="5" type="synonym">XAGE1E</name>
</gene>
<dbReference type="EMBL" id="AF251237">
    <property type="protein sequence ID" value="AAG01401.1"/>
    <property type="status" value="ALT_INIT"/>
    <property type="molecule type" value="mRNA"/>
</dbReference>
<dbReference type="EMBL" id="AJ290447">
    <property type="protein sequence ID" value="CAC38107.1"/>
    <property type="molecule type" value="mRNA"/>
</dbReference>
<dbReference type="EMBL" id="AJ400997">
    <property type="protein sequence ID" value="CAC38108.1"/>
    <property type="molecule type" value="Genomic_DNA"/>
</dbReference>
<dbReference type="EMBL" id="AJ318878">
    <property type="protein sequence ID" value="CAC82986.1"/>
    <property type="status" value="ALT_INIT"/>
    <property type="molecule type" value="mRNA"/>
</dbReference>
<dbReference type="EMBL" id="AJ318879">
    <property type="protein sequence ID" value="CAC82987.1"/>
    <property type="molecule type" value="mRNA"/>
</dbReference>
<dbReference type="EMBL" id="BT007099">
    <property type="protein sequence ID" value="AAP35763.1"/>
    <property type="molecule type" value="mRNA"/>
</dbReference>
<dbReference type="EMBL" id="AL772246">
    <property type="protein sequence ID" value="CAI41526.1"/>
    <property type="status" value="ALT_SEQ"/>
    <property type="molecule type" value="Genomic_DNA"/>
</dbReference>
<dbReference type="EMBL" id="AL772246">
    <property type="protein sequence ID" value="CAI41527.1"/>
    <property type="molecule type" value="Genomic_DNA"/>
</dbReference>
<dbReference type="EMBL" id="AL772246">
    <property type="protein sequence ID" value="CAI41528.1"/>
    <property type="molecule type" value="Genomic_DNA"/>
</dbReference>
<dbReference type="EMBL" id="AL772246">
    <property type="protein sequence ID" value="CAI41530.1"/>
    <property type="molecule type" value="Genomic_DNA"/>
</dbReference>
<dbReference type="EMBL" id="AL772246">
    <property type="protein sequence ID" value="CAI41531.1"/>
    <property type="status" value="ALT_SEQ"/>
    <property type="molecule type" value="Genomic_DNA"/>
</dbReference>
<dbReference type="EMBL" id="AL772246">
    <property type="protein sequence ID" value="CAI41532.1"/>
    <property type="molecule type" value="Genomic_DNA"/>
</dbReference>
<dbReference type="EMBL" id="AL772246">
    <property type="protein sequence ID" value="CAI41533.1"/>
    <property type="molecule type" value="Genomic_DNA"/>
</dbReference>
<dbReference type="EMBL" id="AL772246">
    <property type="protein sequence ID" value="CAI41534.1"/>
    <property type="status" value="ALT_SEQ"/>
    <property type="molecule type" value="Genomic_DNA"/>
</dbReference>
<dbReference type="EMBL" id="BX088602">
    <property type="status" value="NOT_ANNOTATED_CDS"/>
    <property type="molecule type" value="Genomic_DNA"/>
</dbReference>
<dbReference type="EMBL" id="BC009538">
    <property type="protein sequence ID" value="AAH09538.2"/>
    <property type="status" value="ALT_INIT"/>
    <property type="molecule type" value="mRNA"/>
</dbReference>
<dbReference type="CCDS" id="CCDS48126.2">
    <molecule id="Q9HD64-2"/>
</dbReference>
<dbReference type="CCDS" id="CCDS48128.1">
    <molecule id="Q9HD64-4"/>
</dbReference>
<dbReference type="CCDS" id="CCDS75982.1">
    <molecule id="Q9HD64-2"/>
</dbReference>
<dbReference type="CCDS" id="CCDS75983.1">
    <molecule id="Q9HD64-4"/>
</dbReference>
<dbReference type="RefSeq" id="NP_001091063.2">
    <molecule id="Q9HD64-2"/>
    <property type="nucleotide sequence ID" value="NM_001097594.3"/>
</dbReference>
<dbReference type="RefSeq" id="NP_001091065.1">
    <molecule id="Q9HD64-4"/>
    <property type="nucleotide sequence ID" value="NM_001097596.3"/>
</dbReference>
<dbReference type="RefSeq" id="NP_001091073.2">
    <molecule id="Q9HD64-2"/>
    <property type="nucleotide sequence ID" value="NM_001097604.2"/>
</dbReference>
<dbReference type="RefSeq" id="NP_001091074.1">
    <molecule id="Q9HD64-4"/>
    <property type="nucleotide sequence ID" value="NM_001097605.2"/>
</dbReference>
<dbReference type="RefSeq" id="XP_016885236.1">
    <property type="nucleotide sequence ID" value="XM_017029747.1"/>
</dbReference>
<dbReference type="RefSeq" id="XP_016885238.1">
    <property type="nucleotide sequence ID" value="XM_017029749.1"/>
</dbReference>
<dbReference type="BioGRID" id="575500">
    <property type="interactions" value="13"/>
</dbReference>
<dbReference type="BioGRID" id="575617">
    <property type="interactions" value="45"/>
</dbReference>
<dbReference type="FunCoup" id="Q9HD64">
    <property type="interactions" value="88"/>
</dbReference>
<dbReference type="IntAct" id="Q9HD64">
    <property type="interactions" value="46"/>
</dbReference>
<dbReference type="STRING" id="9606.ENSP00000364752"/>
<dbReference type="ChEMBL" id="CHEMBL4295952"/>
<dbReference type="iPTMnet" id="Q9HD64"/>
<dbReference type="PhosphoSitePlus" id="Q9HD64"/>
<dbReference type="BioMuta" id="HGNC:18372"/>
<dbReference type="DMDM" id="334302901"/>
<dbReference type="jPOST" id="Q9HD64"/>
<dbReference type="MassIVE" id="Q9HD64"/>
<dbReference type="PaxDb" id="9606-ENSP00000364752"/>
<dbReference type="PeptideAtlas" id="Q9HD64"/>
<dbReference type="ProteomicsDB" id="81838">
    <molecule id="Q9HD64-2"/>
</dbReference>
<dbReference type="ProteomicsDB" id="81839">
    <molecule id="Q9HD64-4"/>
</dbReference>
<dbReference type="Pumba" id="Q9HD64"/>
<dbReference type="Antibodypedia" id="26426">
    <property type="antibodies" value="75 antibodies from 20 providers"/>
</dbReference>
<dbReference type="Antibodypedia" id="54311">
    <property type="antibodies" value="17 antibodies from 4 providers"/>
</dbReference>
<dbReference type="DNASU" id="9503"/>
<dbReference type="Ensembl" id="ENST00000375600.5">
    <molecule id="Q9HD64-4"/>
    <property type="protein sequence ID" value="ENSP00000364750.1"/>
    <property type="gene ID" value="ENSG00000204379.11"/>
</dbReference>
<dbReference type="Ensembl" id="ENST00000375602.2">
    <molecule id="Q9HD64-2"/>
    <property type="protein sequence ID" value="ENSP00000364752.1"/>
    <property type="gene ID" value="ENSG00000204379.11"/>
</dbReference>
<dbReference type="Ensembl" id="ENST00000375613.7">
    <molecule id="Q9HD64-4"/>
    <property type="protein sequence ID" value="ENSP00000364763.3"/>
    <property type="gene ID" value="ENSG00000204382.12"/>
</dbReference>
<dbReference type="Ensembl" id="ENST00000375616.6">
    <molecule id="Q9HD64-2"/>
    <property type="protein sequence ID" value="ENSP00000364766.1"/>
    <property type="gene ID" value="ENSG00000204382.12"/>
</dbReference>
<dbReference type="Ensembl" id="ENST00000518075.1">
    <molecule id="Q9HD64-2"/>
    <property type="protein sequence ID" value="ENSP00000430130.1"/>
    <property type="gene ID" value="ENSG00000204382.12"/>
</dbReference>
<dbReference type="GeneID" id="653067"/>
<dbReference type="GeneID" id="653220"/>
<dbReference type="KEGG" id="hsa:653067"/>
<dbReference type="KEGG" id="hsa:653220"/>
<dbReference type="MANE-Select" id="ENST00000375602.2">
    <property type="protein sequence ID" value="ENSP00000364752.1"/>
    <property type="RefSeq nucleotide sequence ID" value="NM_001097594.3"/>
    <property type="RefSeq protein sequence ID" value="NP_001091063.2"/>
</dbReference>
<dbReference type="MANE-Select" id="ENST00000375616.6">
    <property type="protein sequence ID" value="ENSP00000364766.1"/>
    <property type="RefSeq nucleotide sequence ID" value="NM_001097604.3"/>
    <property type="RefSeq protein sequence ID" value="NP_001091073.2"/>
</dbReference>
<dbReference type="UCSC" id="uc004dqf.4">
    <molecule id="Q9HD64-2"/>
    <property type="organism name" value="human"/>
</dbReference>
<dbReference type="AGR" id="HGNC:25400"/>
<dbReference type="AGR" id="HGNC:4111"/>
<dbReference type="CTD" id="653067"/>
<dbReference type="CTD" id="653220"/>
<dbReference type="DisGeNET" id="653067"/>
<dbReference type="DisGeNET" id="653220"/>
<dbReference type="GeneCards" id="XAGE1A"/>
<dbReference type="GeneCards" id="XAGE1B"/>
<dbReference type="HGNC" id="HGNC:4111">
    <property type="gene designation" value="XAGE1A"/>
</dbReference>
<dbReference type="HGNC" id="HGNC:25400">
    <property type="gene designation" value="XAGE1B"/>
</dbReference>
<dbReference type="HPA" id="ENSG00000204379">
    <property type="expression patterns" value="Tissue enriched (testis)"/>
</dbReference>
<dbReference type="HPA" id="ENSG00000204382">
    <property type="expression patterns" value="Tissue enriched (testis)"/>
</dbReference>
<dbReference type="MIM" id="300289">
    <property type="type" value="gene"/>
</dbReference>
<dbReference type="MIM" id="300742">
    <property type="type" value="gene"/>
</dbReference>
<dbReference type="neXtProt" id="NX_Q9HD64"/>
<dbReference type="OpenTargets" id="ENSG00000204382"/>
<dbReference type="VEuPathDB" id="HostDB:ENSG00000204379"/>
<dbReference type="VEuPathDB" id="HostDB:ENSG00000204382"/>
<dbReference type="eggNOG" id="ENOG502SZKH">
    <property type="taxonomic scope" value="Eukaryota"/>
</dbReference>
<dbReference type="GeneTree" id="ENSGT00940000153097"/>
<dbReference type="HOGENOM" id="CLU_2573264_0_0_1"/>
<dbReference type="InParanoid" id="Q9HD64"/>
<dbReference type="OMA" id="GEHYKMP"/>
<dbReference type="OrthoDB" id="9536099at2759"/>
<dbReference type="PAN-GO" id="Q9HD64">
    <property type="GO annotations" value="0 GO annotations based on evolutionary models"/>
</dbReference>
<dbReference type="TreeFam" id="TF342350"/>
<dbReference type="PathwayCommons" id="Q9HD64"/>
<dbReference type="SignaLink" id="Q9HD64"/>
<dbReference type="BioGRID-ORCS" id="653067">
    <property type="hits" value="8 hits in 237 CRISPR screens"/>
</dbReference>
<dbReference type="BioGRID-ORCS" id="653220">
    <property type="hits" value="15 hits in 251 CRISPR screens"/>
</dbReference>
<dbReference type="Pharos" id="Q9HD64">
    <property type="development level" value="Tbio"/>
</dbReference>
<dbReference type="PRO" id="PR:Q9HD64"/>
<dbReference type="Proteomes" id="UP000005640">
    <property type="component" value="Chromosome X"/>
</dbReference>
<dbReference type="RNAct" id="Q9HD64">
    <property type="molecule type" value="protein"/>
</dbReference>
<dbReference type="Bgee" id="ENSG00000204379">
    <property type="expression patterns" value="Expressed in male germ line stem cell (sensu Vertebrata) in testis and 72 other cell types or tissues"/>
</dbReference>
<proteinExistence type="evidence at protein level"/>
<reference key="1">
    <citation type="journal article" date="2000" name="Cancer Res.">
        <title>XAGE-1, a new gene that is frequently expressed in Ewing's sarcoma.</title>
        <authorList>
            <person name="Liu X.F."/>
            <person name="Helman L.J."/>
            <person name="Yeung C."/>
            <person name="Bera T.K."/>
            <person name="Lee B."/>
            <person name="Pastan I."/>
        </authorList>
    </citation>
    <scope>NUCLEOTIDE SEQUENCE [MRNA] (ISOFORM B)</scope>
    <source>
        <tissue>Testis</tissue>
    </source>
</reference>
<reference key="2">
    <citation type="journal article" date="2002" name="Int. J. Cancer">
        <title>The XAGE family of cancer/testis-associated genes: alignment and expression profile in normal tissues, melanoma lesions and Ewing's sarcoma.</title>
        <authorList>
            <person name="Zendman A.J.W."/>
            <person name="van Kraats A.A."/>
            <person name="Weidle U.H."/>
            <person name="Ruiter D.J."/>
            <person name="van Muijen G.N.P."/>
        </authorList>
    </citation>
    <scope>NUCLEOTIDE SEQUENCE [GENOMIC DNA / MRNA] (ISOFORMS B AND D)</scope>
</reference>
<reference key="3">
    <citation type="submission" date="2003-05" db="EMBL/GenBank/DDBJ databases">
        <title>Cloning of human full-length CDSs in BD Creator(TM) system donor vector.</title>
        <authorList>
            <person name="Kalnine N."/>
            <person name="Chen X."/>
            <person name="Rolfs A."/>
            <person name="Halleck A."/>
            <person name="Hines L."/>
            <person name="Eisenstein S."/>
            <person name="Koundinya M."/>
            <person name="Raphael J."/>
            <person name="Moreira D."/>
            <person name="Kelley T."/>
            <person name="LaBaer J."/>
            <person name="Lin Y."/>
            <person name="Phelan M."/>
            <person name="Farmer A."/>
        </authorList>
    </citation>
    <scope>NUCLEOTIDE SEQUENCE [LARGE SCALE MRNA] (ISOFORM B)</scope>
</reference>
<reference key="4">
    <citation type="journal article" date="2005" name="Nature">
        <title>The DNA sequence of the human X chromosome.</title>
        <authorList>
            <person name="Ross M.T."/>
            <person name="Grafham D.V."/>
            <person name="Coffey A.J."/>
            <person name="Scherer S."/>
            <person name="McLay K."/>
            <person name="Muzny D."/>
            <person name="Platzer M."/>
            <person name="Howell G.R."/>
            <person name="Burrows C."/>
            <person name="Bird C.P."/>
            <person name="Frankish A."/>
            <person name="Lovell F.L."/>
            <person name="Howe K.L."/>
            <person name="Ashurst J.L."/>
            <person name="Fulton R.S."/>
            <person name="Sudbrak R."/>
            <person name="Wen G."/>
            <person name="Jones M.C."/>
            <person name="Hurles M.E."/>
            <person name="Andrews T.D."/>
            <person name="Scott C.E."/>
            <person name="Searle S."/>
            <person name="Ramser J."/>
            <person name="Whittaker A."/>
            <person name="Deadman R."/>
            <person name="Carter N.P."/>
            <person name="Hunt S.E."/>
            <person name="Chen R."/>
            <person name="Cree A."/>
            <person name="Gunaratne P."/>
            <person name="Havlak P."/>
            <person name="Hodgson A."/>
            <person name="Metzker M.L."/>
            <person name="Richards S."/>
            <person name="Scott G."/>
            <person name="Steffen D."/>
            <person name="Sodergren E."/>
            <person name="Wheeler D.A."/>
            <person name="Worley K.C."/>
            <person name="Ainscough R."/>
            <person name="Ambrose K.D."/>
            <person name="Ansari-Lari M.A."/>
            <person name="Aradhya S."/>
            <person name="Ashwell R.I."/>
            <person name="Babbage A.K."/>
            <person name="Bagguley C.L."/>
            <person name="Ballabio A."/>
            <person name="Banerjee R."/>
            <person name="Barker G.E."/>
            <person name="Barlow K.F."/>
            <person name="Barrett I.P."/>
            <person name="Bates K.N."/>
            <person name="Beare D.M."/>
            <person name="Beasley H."/>
            <person name="Beasley O."/>
            <person name="Beck A."/>
            <person name="Bethel G."/>
            <person name="Blechschmidt K."/>
            <person name="Brady N."/>
            <person name="Bray-Allen S."/>
            <person name="Bridgeman A.M."/>
            <person name="Brown A.J."/>
            <person name="Brown M.J."/>
            <person name="Bonnin D."/>
            <person name="Bruford E.A."/>
            <person name="Buhay C."/>
            <person name="Burch P."/>
            <person name="Burford D."/>
            <person name="Burgess J."/>
            <person name="Burrill W."/>
            <person name="Burton J."/>
            <person name="Bye J.M."/>
            <person name="Carder C."/>
            <person name="Carrel L."/>
            <person name="Chako J."/>
            <person name="Chapman J.C."/>
            <person name="Chavez D."/>
            <person name="Chen E."/>
            <person name="Chen G."/>
            <person name="Chen Y."/>
            <person name="Chen Z."/>
            <person name="Chinault C."/>
            <person name="Ciccodicola A."/>
            <person name="Clark S.Y."/>
            <person name="Clarke G."/>
            <person name="Clee C.M."/>
            <person name="Clegg S."/>
            <person name="Clerc-Blankenburg K."/>
            <person name="Clifford K."/>
            <person name="Cobley V."/>
            <person name="Cole C.G."/>
            <person name="Conquer J.S."/>
            <person name="Corby N."/>
            <person name="Connor R.E."/>
            <person name="David R."/>
            <person name="Davies J."/>
            <person name="Davis C."/>
            <person name="Davis J."/>
            <person name="Delgado O."/>
            <person name="Deshazo D."/>
            <person name="Dhami P."/>
            <person name="Ding Y."/>
            <person name="Dinh H."/>
            <person name="Dodsworth S."/>
            <person name="Draper H."/>
            <person name="Dugan-Rocha S."/>
            <person name="Dunham A."/>
            <person name="Dunn M."/>
            <person name="Durbin K.J."/>
            <person name="Dutta I."/>
            <person name="Eades T."/>
            <person name="Ellwood M."/>
            <person name="Emery-Cohen A."/>
            <person name="Errington H."/>
            <person name="Evans K.L."/>
            <person name="Faulkner L."/>
            <person name="Francis F."/>
            <person name="Frankland J."/>
            <person name="Fraser A.E."/>
            <person name="Galgoczy P."/>
            <person name="Gilbert J."/>
            <person name="Gill R."/>
            <person name="Gloeckner G."/>
            <person name="Gregory S.G."/>
            <person name="Gribble S."/>
            <person name="Griffiths C."/>
            <person name="Grocock R."/>
            <person name="Gu Y."/>
            <person name="Gwilliam R."/>
            <person name="Hamilton C."/>
            <person name="Hart E.A."/>
            <person name="Hawes A."/>
            <person name="Heath P.D."/>
            <person name="Heitmann K."/>
            <person name="Hennig S."/>
            <person name="Hernandez J."/>
            <person name="Hinzmann B."/>
            <person name="Ho S."/>
            <person name="Hoffs M."/>
            <person name="Howden P.J."/>
            <person name="Huckle E.J."/>
            <person name="Hume J."/>
            <person name="Hunt P.J."/>
            <person name="Hunt A.R."/>
            <person name="Isherwood J."/>
            <person name="Jacob L."/>
            <person name="Johnson D."/>
            <person name="Jones S."/>
            <person name="de Jong P.J."/>
            <person name="Joseph S.S."/>
            <person name="Keenan S."/>
            <person name="Kelly S."/>
            <person name="Kershaw J.K."/>
            <person name="Khan Z."/>
            <person name="Kioschis P."/>
            <person name="Klages S."/>
            <person name="Knights A.J."/>
            <person name="Kosiura A."/>
            <person name="Kovar-Smith C."/>
            <person name="Laird G.K."/>
            <person name="Langford C."/>
            <person name="Lawlor S."/>
            <person name="Leversha M."/>
            <person name="Lewis L."/>
            <person name="Liu W."/>
            <person name="Lloyd C."/>
            <person name="Lloyd D.M."/>
            <person name="Loulseged H."/>
            <person name="Loveland J.E."/>
            <person name="Lovell J.D."/>
            <person name="Lozado R."/>
            <person name="Lu J."/>
            <person name="Lyne R."/>
            <person name="Ma J."/>
            <person name="Maheshwari M."/>
            <person name="Matthews L.H."/>
            <person name="McDowall J."/>
            <person name="McLaren S."/>
            <person name="McMurray A."/>
            <person name="Meidl P."/>
            <person name="Meitinger T."/>
            <person name="Milne S."/>
            <person name="Miner G."/>
            <person name="Mistry S.L."/>
            <person name="Morgan M."/>
            <person name="Morris S."/>
            <person name="Mueller I."/>
            <person name="Mullikin J.C."/>
            <person name="Nguyen N."/>
            <person name="Nordsiek G."/>
            <person name="Nyakatura G."/>
            <person name="O'dell C.N."/>
            <person name="Okwuonu G."/>
            <person name="Palmer S."/>
            <person name="Pandian R."/>
            <person name="Parker D."/>
            <person name="Parrish J."/>
            <person name="Pasternak S."/>
            <person name="Patel D."/>
            <person name="Pearce A.V."/>
            <person name="Pearson D.M."/>
            <person name="Pelan S.E."/>
            <person name="Perez L."/>
            <person name="Porter K.M."/>
            <person name="Ramsey Y."/>
            <person name="Reichwald K."/>
            <person name="Rhodes S."/>
            <person name="Ridler K.A."/>
            <person name="Schlessinger D."/>
            <person name="Schueler M.G."/>
            <person name="Sehra H.K."/>
            <person name="Shaw-Smith C."/>
            <person name="Shen H."/>
            <person name="Sheridan E.M."/>
            <person name="Shownkeen R."/>
            <person name="Skuce C.D."/>
            <person name="Smith M.L."/>
            <person name="Sotheran E.C."/>
            <person name="Steingruber H.E."/>
            <person name="Steward C.A."/>
            <person name="Storey R."/>
            <person name="Swann R.M."/>
            <person name="Swarbreck D."/>
            <person name="Tabor P.E."/>
            <person name="Taudien S."/>
            <person name="Taylor T."/>
            <person name="Teague B."/>
            <person name="Thomas K."/>
            <person name="Thorpe A."/>
            <person name="Timms K."/>
            <person name="Tracey A."/>
            <person name="Trevanion S."/>
            <person name="Tromans A.C."/>
            <person name="d'Urso M."/>
            <person name="Verduzco D."/>
            <person name="Villasana D."/>
            <person name="Waldron L."/>
            <person name="Wall M."/>
            <person name="Wang Q."/>
            <person name="Warren J."/>
            <person name="Warry G.L."/>
            <person name="Wei X."/>
            <person name="West A."/>
            <person name="Whitehead S.L."/>
            <person name="Whiteley M.N."/>
            <person name="Wilkinson J.E."/>
            <person name="Willey D.L."/>
            <person name="Williams G."/>
            <person name="Williams L."/>
            <person name="Williamson A."/>
            <person name="Williamson H."/>
            <person name="Wilming L."/>
            <person name="Woodmansey R.L."/>
            <person name="Wray P.W."/>
            <person name="Yen J."/>
            <person name="Zhang J."/>
            <person name="Zhou J."/>
            <person name="Zoghbi H."/>
            <person name="Zorilla S."/>
            <person name="Buck D."/>
            <person name="Reinhardt R."/>
            <person name="Poustka A."/>
            <person name="Rosenthal A."/>
            <person name="Lehrach H."/>
            <person name="Meindl A."/>
            <person name="Minx P.J."/>
            <person name="Hillier L.W."/>
            <person name="Willard H.F."/>
            <person name="Wilson R.K."/>
            <person name="Waterston R.H."/>
            <person name="Rice C.M."/>
            <person name="Vaudin M."/>
            <person name="Coulson A."/>
            <person name="Nelson D.L."/>
            <person name="Weinstock G."/>
            <person name="Sulston J.E."/>
            <person name="Durbin R.M."/>
            <person name="Hubbard T."/>
            <person name="Gibbs R.A."/>
            <person name="Beck S."/>
            <person name="Rogers J."/>
            <person name="Bentley D.R."/>
        </authorList>
    </citation>
    <scope>NUCLEOTIDE SEQUENCE [LARGE SCALE GENOMIC DNA]</scope>
</reference>
<reference key="5">
    <citation type="journal article" date="2004" name="Genome Res.">
        <title>The status, quality, and expansion of the NIH full-length cDNA project: the Mammalian Gene Collection (MGC).</title>
        <authorList>
            <consortium name="The MGC Project Team"/>
        </authorList>
    </citation>
    <scope>NUCLEOTIDE SEQUENCE [LARGE SCALE MRNA] (ISOFORM B)</scope>
    <source>
        <tissue>Lung</tissue>
    </source>
</reference>
<reference key="6">
    <citation type="journal article" date="2002" name="Mol. Cancer Ther.">
        <title>Characterization of overlapping XAGE-1 transcripts encoding a cancer testis antigen expressed in lung, breast, and other types of cancers.</title>
        <authorList>
            <person name="Egland K.A."/>
            <person name="Kumar V."/>
            <person name="Duray P."/>
            <person name="Pastan I."/>
        </authorList>
    </citation>
    <scope>TISSUE SPECIFICITY</scope>
    <scope>IDENTIFICATION OF INITIATOR METHIONINE (ISOFORM B)</scope>
</reference>
<reference key="7">
    <citation type="journal article" date="2007" name="Cancer Immun.">
        <title>Identification of XAGE-1 isoforms: predominant expression of XAGE-1b in testis and tumors.</title>
        <authorList>
            <person name="Sato S."/>
            <person name="Noguchi Y."/>
            <person name="Ohara N."/>
            <person name="Uenaka A."/>
            <person name="Shimono M."/>
            <person name="Nakagawa K."/>
            <person name="Koizumi F."/>
            <person name="Ishida T."/>
            <person name="Yoshino T."/>
            <person name="Shiratori Y."/>
            <person name="Nakayama E."/>
        </authorList>
    </citation>
    <scope>TISSUE SPECIFICITY</scope>
    <scope>ALTERNATIVE SPLICING (ISOFORMS B AND D)</scope>
    <scope>IDENTIFICATION OF INITIATOR METHIONINE (ISOFORM B)</scope>
</reference>
<reference key="8">
    <citation type="journal article" date="2013" name="J. Proteome Res.">
        <title>Toward a comprehensive characterization of a human cancer cell phosphoproteome.</title>
        <authorList>
            <person name="Zhou H."/>
            <person name="Di Palma S."/>
            <person name="Preisinger C."/>
            <person name="Peng M."/>
            <person name="Polat A.N."/>
            <person name="Heck A.J."/>
            <person name="Mohammed S."/>
        </authorList>
    </citation>
    <scope>PHOSPHORYLATION [LARGE SCALE ANALYSIS] AT SER-20</scope>
    <scope>IDENTIFICATION BY MASS SPECTROMETRY [LARGE SCALE ANALYSIS]</scope>
    <source>
        <tissue>Erythroleukemia</tissue>
    </source>
</reference>
<reference key="9">
    <citation type="journal article" date="2017" name="Nat. Struct. Mol. Biol.">
        <title>Site-specific mapping of the human SUMO proteome reveals co-modification with phosphorylation.</title>
        <authorList>
            <person name="Hendriks I.A."/>
            <person name="Lyon D."/>
            <person name="Young C."/>
            <person name="Jensen L.J."/>
            <person name="Vertegaal A.C."/>
            <person name="Nielsen M.L."/>
        </authorList>
    </citation>
    <scope>SUMOYLATION [LARGE SCALE ANALYSIS] AT LYS-12; LYS-61 AND LYS-65</scope>
    <scope>IDENTIFICATION BY MASS SPECTROMETRY [LARGE SCALE ANALYSIS]</scope>
</reference>